<accession>Q5R7H4</accession>
<dbReference type="EC" id="1.3.1.70" evidence="2"/>
<dbReference type="EMBL" id="CR860142">
    <property type="protein sequence ID" value="CAH92286.1"/>
    <property type="molecule type" value="mRNA"/>
</dbReference>
<dbReference type="RefSeq" id="NP_001127533.1">
    <property type="nucleotide sequence ID" value="NM_001134061.1"/>
</dbReference>
<dbReference type="BMRB" id="Q5R7H4"/>
<dbReference type="SMR" id="Q5R7H4"/>
<dbReference type="FunCoup" id="Q5R7H4">
    <property type="interactions" value="2491"/>
</dbReference>
<dbReference type="STRING" id="9601.ENSPPYP00000000176"/>
<dbReference type="GeneID" id="100174610"/>
<dbReference type="KEGG" id="pon:100174610"/>
<dbReference type="CTD" id="3930"/>
<dbReference type="eggNOG" id="KOG1435">
    <property type="taxonomic scope" value="Eukaryota"/>
</dbReference>
<dbReference type="InParanoid" id="Q5R7H4"/>
<dbReference type="OrthoDB" id="5326588at2759"/>
<dbReference type="UniPathway" id="UPA00063"/>
<dbReference type="Proteomes" id="UP000001595">
    <property type="component" value="Unplaced"/>
</dbReference>
<dbReference type="GO" id="GO:0005737">
    <property type="term" value="C:cytoplasm"/>
    <property type="evidence" value="ECO:0000250"/>
    <property type="project" value="UniProtKB"/>
</dbReference>
<dbReference type="GO" id="GO:0005789">
    <property type="term" value="C:endoplasmic reticulum membrane"/>
    <property type="evidence" value="ECO:0000250"/>
    <property type="project" value="UniProtKB"/>
</dbReference>
<dbReference type="GO" id="GO:0005637">
    <property type="term" value="C:nuclear inner membrane"/>
    <property type="evidence" value="ECO:0007669"/>
    <property type="project" value="UniProtKB-SubCell"/>
</dbReference>
<dbReference type="GO" id="GO:0005634">
    <property type="term" value="C:nucleus"/>
    <property type="evidence" value="ECO:0000250"/>
    <property type="project" value="UniProtKB"/>
</dbReference>
<dbReference type="GO" id="GO:0050613">
    <property type="term" value="F:Delta14-sterol reductase activity"/>
    <property type="evidence" value="ECO:0000250"/>
    <property type="project" value="UniProtKB"/>
</dbReference>
<dbReference type="GO" id="GO:0003677">
    <property type="term" value="F:DNA binding"/>
    <property type="evidence" value="ECO:0007669"/>
    <property type="project" value="UniProtKB-KW"/>
</dbReference>
<dbReference type="GO" id="GO:0070402">
    <property type="term" value="F:NADPH binding"/>
    <property type="evidence" value="ECO:0000250"/>
    <property type="project" value="UniProtKB"/>
</dbReference>
<dbReference type="GO" id="GO:0006695">
    <property type="term" value="P:cholesterol biosynthetic process"/>
    <property type="evidence" value="ECO:0000250"/>
    <property type="project" value="UniProtKB"/>
</dbReference>
<dbReference type="GO" id="GO:0030223">
    <property type="term" value="P:neutrophil differentiation"/>
    <property type="evidence" value="ECO:0000250"/>
    <property type="project" value="UniProtKB"/>
</dbReference>
<dbReference type="CDD" id="cd20381">
    <property type="entry name" value="Tudor_LBR"/>
    <property type="match status" value="1"/>
</dbReference>
<dbReference type="FunFam" id="1.20.120.1630:FF:000001">
    <property type="entry name" value="delta(14)-sterol reductase isoform X1"/>
    <property type="match status" value="1"/>
</dbReference>
<dbReference type="FunFam" id="2.30.30.140:FF:000058">
    <property type="entry name" value="Lamin B receptor"/>
    <property type="match status" value="1"/>
</dbReference>
<dbReference type="Gene3D" id="1.20.120.1630">
    <property type="match status" value="1"/>
</dbReference>
<dbReference type="Gene3D" id="2.30.30.140">
    <property type="match status" value="1"/>
</dbReference>
<dbReference type="InterPro" id="IPR001171">
    <property type="entry name" value="ERG24_DHCR-like"/>
</dbReference>
<dbReference type="InterPro" id="IPR019023">
    <property type="entry name" value="Lamin-B_rcpt_of_tudor"/>
</dbReference>
<dbReference type="InterPro" id="IPR018083">
    <property type="entry name" value="Sterol_reductase_CS"/>
</dbReference>
<dbReference type="InterPro" id="IPR002999">
    <property type="entry name" value="Tudor"/>
</dbReference>
<dbReference type="PANTHER" id="PTHR21257">
    <property type="entry name" value="DELTA(14)-STEROL REDUCTASE"/>
    <property type="match status" value="1"/>
</dbReference>
<dbReference type="PANTHER" id="PTHR21257:SF55">
    <property type="entry name" value="DELTA(14)-STEROL REDUCTASE LBR"/>
    <property type="match status" value="1"/>
</dbReference>
<dbReference type="Pfam" id="PF01222">
    <property type="entry name" value="ERG4_ERG24"/>
    <property type="match status" value="1"/>
</dbReference>
<dbReference type="Pfam" id="PF09465">
    <property type="entry name" value="LBR_tudor"/>
    <property type="match status" value="1"/>
</dbReference>
<dbReference type="SMART" id="SM00333">
    <property type="entry name" value="TUDOR"/>
    <property type="match status" value="1"/>
</dbReference>
<dbReference type="SUPFAM" id="SSF63748">
    <property type="entry name" value="Tudor/PWWP/MBT"/>
    <property type="match status" value="1"/>
</dbReference>
<dbReference type="PROSITE" id="PS01017">
    <property type="entry name" value="STEROL_REDUCT_1"/>
    <property type="match status" value="1"/>
</dbReference>
<dbReference type="PROSITE" id="PS01018">
    <property type="entry name" value="STEROL_REDUCT_2"/>
    <property type="match status" value="1"/>
</dbReference>
<evidence type="ECO:0000250" key="1">
    <source>
        <dbReference type="UniProtKB" id="P23913"/>
    </source>
</evidence>
<evidence type="ECO:0000250" key="2">
    <source>
        <dbReference type="UniProtKB" id="Q14739"/>
    </source>
</evidence>
<evidence type="ECO:0000250" key="3">
    <source>
        <dbReference type="UniProtKB" id="Q3U9G9"/>
    </source>
</evidence>
<evidence type="ECO:0000255" key="4"/>
<evidence type="ECO:0000256" key="5">
    <source>
        <dbReference type="SAM" id="MobiDB-lite"/>
    </source>
</evidence>
<evidence type="ECO:0000305" key="6"/>
<gene>
    <name type="primary">LBR</name>
</gene>
<feature type="chain" id="PRO_0000227910" description="Delta(14)-sterol reductase LBR">
    <location>
        <begin position="1"/>
        <end position="615"/>
    </location>
</feature>
<feature type="topological domain" description="Nuclear" evidence="4">
    <location>
        <begin position="1"/>
        <end position="211"/>
    </location>
</feature>
<feature type="transmembrane region" description="Helical" evidence="4">
    <location>
        <begin position="212"/>
        <end position="232"/>
    </location>
</feature>
<feature type="transmembrane region" description="Helical" evidence="4">
    <location>
        <begin position="258"/>
        <end position="278"/>
    </location>
</feature>
<feature type="transmembrane region" description="Helical" evidence="4">
    <location>
        <begin position="299"/>
        <end position="319"/>
    </location>
</feature>
<feature type="transmembrane region" description="Helical" evidence="4">
    <location>
        <begin position="326"/>
        <end position="346"/>
    </location>
</feature>
<feature type="transmembrane region" description="Helical" evidence="4">
    <location>
        <begin position="415"/>
        <end position="435"/>
    </location>
</feature>
<feature type="transmembrane region" description="Helical" evidence="4">
    <location>
        <begin position="447"/>
        <end position="467"/>
    </location>
</feature>
<feature type="transmembrane region" description="Helical" evidence="4">
    <location>
        <begin position="481"/>
        <end position="501"/>
    </location>
</feature>
<feature type="transmembrane region" description="Helical" evidence="4">
    <location>
        <begin position="561"/>
        <end position="581"/>
    </location>
</feature>
<feature type="domain" description="Tudor">
    <location>
        <begin position="1"/>
        <end position="62"/>
    </location>
</feature>
<feature type="region of interest" description="Disordered" evidence="5">
    <location>
        <begin position="53"/>
        <end position="109"/>
    </location>
</feature>
<feature type="compositionally biased region" description="Basic residues" evidence="5">
    <location>
        <begin position="73"/>
        <end position="86"/>
    </location>
</feature>
<feature type="modified residue" description="N6-acetyllysine" evidence="2">
    <location>
        <position position="55"/>
    </location>
</feature>
<feature type="modified residue" description="Phosphothreonine" evidence="2">
    <location>
        <position position="58"/>
    </location>
</feature>
<feature type="modified residue" description="Phosphoserine" evidence="2">
    <location>
        <position position="59"/>
    </location>
</feature>
<feature type="modified residue" description="Phosphoserine" evidence="3">
    <location>
        <position position="67"/>
    </location>
</feature>
<feature type="modified residue" description="Phosphoserine; by CDK1" evidence="2">
    <location>
        <position position="71"/>
    </location>
</feature>
<feature type="modified residue" description="Phosphoserine; by CDK1" evidence="2">
    <location>
        <position position="86"/>
    </location>
</feature>
<feature type="modified residue" description="Phosphoserine" evidence="2">
    <location>
        <position position="97"/>
    </location>
</feature>
<feature type="modified residue" description="Phosphoserine" evidence="2">
    <location>
        <position position="99"/>
    </location>
</feature>
<feature type="modified residue" description="Phosphothreonine" evidence="2">
    <location>
        <position position="118"/>
    </location>
</feature>
<feature type="modified residue" description="Phosphoserine" evidence="2">
    <location>
        <position position="128"/>
    </location>
</feature>
<feature type="modified residue" description="Phosphothreonine" evidence="2">
    <location>
        <position position="200"/>
    </location>
</feature>
<feature type="modified residue" description="N6-acetyllysine" evidence="2">
    <location>
        <position position="594"/>
    </location>
</feature>
<feature type="modified residue" description="N6-acetyllysine" evidence="2">
    <location>
        <position position="601"/>
    </location>
</feature>
<organism>
    <name type="scientific">Pongo abelii</name>
    <name type="common">Sumatran orangutan</name>
    <name type="synonym">Pongo pygmaeus abelii</name>
    <dbReference type="NCBI Taxonomy" id="9601"/>
    <lineage>
        <taxon>Eukaryota</taxon>
        <taxon>Metazoa</taxon>
        <taxon>Chordata</taxon>
        <taxon>Craniata</taxon>
        <taxon>Vertebrata</taxon>
        <taxon>Euteleostomi</taxon>
        <taxon>Mammalia</taxon>
        <taxon>Eutheria</taxon>
        <taxon>Euarchontoglires</taxon>
        <taxon>Primates</taxon>
        <taxon>Haplorrhini</taxon>
        <taxon>Catarrhini</taxon>
        <taxon>Hominidae</taxon>
        <taxon>Pongo</taxon>
    </lineage>
</organism>
<protein>
    <recommendedName>
        <fullName>Delta(14)-sterol reductase LBR</fullName>
        <shortName>Delta-14-SR</shortName>
        <ecNumber evidence="2">1.3.1.70</ecNumber>
    </recommendedName>
    <alternativeName>
        <fullName evidence="2">3-beta-hydroxysterol Delta (14)-reductase</fullName>
    </alternativeName>
    <alternativeName>
        <fullName>C-14 sterol reductase</fullName>
        <shortName>C14SR</shortName>
    </alternativeName>
    <alternativeName>
        <fullName evidence="2">Integral nuclear envelope inner membrane protein</fullName>
    </alternativeName>
    <alternativeName>
        <fullName evidence="2">Lamin-B receptor</fullName>
    </alternativeName>
    <alternativeName>
        <fullName>Sterol C14-reductase</fullName>
    </alternativeName>
</protein>
<name>LBR_PONAB</name>
<proteinExistence type="evidence at transcript level"/>
<keyword id="KW-0007">Acetylation</keyword>
<keyword id="KW-0152">Cholesterol biosynthesis</keyword>
<keyword id="KW-0153">Cholesterol metabolism</keyword>
<keyword id="KW-0963">Cytoplasm</keyword>
<keyword id="KW-0238">DNA-binding</keyword>
<keyword id="KW-0256">Endoplasmic reticulum</keyword>
<keyword id="KW-0444">Lipid biosynthesis</keyword>
<keyword id="KW-0443">Lipid metabolism</keyword>
<keyword id="KW-0472">Membrane</keyword>
<keyword id="KW-0539">Nucleus</keyword>
<keyword id="KW-0560">Oxidoreductase</keyword>
<keyword id="KW-0597">Phosphoprotein</keyword>
<keyword id="KW-0675">Receptor</keyword>
<keyword id="KW-1185">Reference proteome</keyword>
<keyword id="KW-0752">Steroid biosynthesis</keyword>
<keyword id="KW-0753">Steroid metabolism</keyword>
<keyword id="KW-0756">Sterol biosynthesis</keyword>
<keyword id="KW-1207">Sterol metabolism</keyword>
<keyword id="KW-0812">Transmembrane</keyword>
<keyword id="KW-1133">Transmembrane helix</keyword>
<sequence>MPSRKFADGEVVRGRWPGSSLYYEVEILSHDSASQLYTVKYKDGTELELKENDIKPLTSFRQRKGGSTSSSPSRRRGSRSRSRSRSPGRPPKSARRSASASHQADIKEARREVEVKLTPLILKPFGNSISRYNGEPEHIERNDVPHKNTQEKFNLSQESSYIATQCSLRPKREEVKLKEIDSKEEKFVAKELAVRTFEVTPIRAKDLEFGGVPGVFLIMFGLPVFLFLLLLMCKQKDPSLLNFPPPLPALYELWETRVFGVYLLWFLIQVVFYLLPIGKVVEGTPLIDGRRLKYRLNGFYAFILTSAVIGTSLFQGVEFHYVYSHFLQFALAATVFCVVLSVYLYMRSLKAPRNDLSPASSGNAVYDFFIGRELNPRIGTFDLKYFCELRPGLIGWVVINLVMLLAEMKIQDRAVPSLAMILVNSFQLLYVVDALWNEEALLTTMDIIHDGFGFMLAFGDLVWVPFIYSFQAFYLVSHPNEVSWPMASLIIVLKFCGYVIFRGANSQKNAFRKNPSDPKLAHLKTIHTSTGKNLLVSGWWGFARHPNYLGDLIMALAWSLACGFNHILPYFYIIYFTMLLVHREARDEYHCKKKYGVAWEKYCQRVPYRIFPYIY</sequence>
<comment type="function">
    <text evidence="2 3">Catalyzes the reduction of the C14-unsaturated bond of lanosterol, as part of the metabolic pathway leading to cholesterol biosynthesis (By similarity). Plays a critical role in myeloid cell cholesterol biosynthesis which is essential to both myeloid cell growth and functional maturation (By similarity). Mediates the activation of NADPH oxidases, perhaps by maintaining critical levels of cholesterol required for membrane lipid raft formation during neutrophil differentiation (By similarity). Anchors the lamina and the heterochromatin to the inner nuclear membrane (By similarity).</text>
</comment>
<comment type="catalytic activity">
    <reaction evidence="2">
        <text>5alpha-cholest-8,14-dien-3beta-ol + NADPH + H(+) = 5alpha-cholest-8-en-3beta-ol + NADP(+)</text>
        <dbReference type="Rhea" id="RHEA:46456"/>
        <dbReference type="ChEBI" id="CHEBI:15378"/>
        <dbReference type="ChEBI" id="CHEBI:16608"/>
        <dbReference type="ChEBI" id="CHEBI:57783"/>
        <dbReference type="ChEBI" id="CHEBI:58349"/>
        <dbReference type="ChEBI" id="CHEBI:86131"/>
    </reaction>
</comment>
<comment type="catalytic activity">
    <reaction evidence="2">
        <text>4,4-dimethyl-5alpha-cholesta-8,24-dien-3beta-ol + NADP(+) = 4,4-dimethyl-5alpha-cholesta-8,14,24-trien-3beta-ol + NADPH + H(+)</text>
        <dbReference type="Rhea" id="RHEA:18561"/>
        <dbReference type="ChEBI" id="CHEBI:15378"/>
        <dbReference type="ChEBI" id="CHEBI:17813"/>
        <dbReference type="ChEBI" id="CHEBI:18364"/>
        <dbReference type="ChEBI" id="CHEBI:57783"/>
        <dbReference type="ChEBI" id="CHEBI:58349"/>
        <dbReference type="EC" id="1.3.1.70"/>
    </reaction>
</comment>
<comment type="catalytic activity">
    <reaction evidence="2">
        <text>4,4-dimethyl-8,14-cholestadien-3beta-ol + NADPH + H(+) = 4,4-dimethyl-5alpha-cholest-8-en-3beta-ol + NADP(+)</text>
        <dbReference type="Rhea" id="RHEA:46812"/>
        <dbReference type="ChEBI" id="CHEBI:15378"/>
        <dbReference type="ChEBI" id="CHEBI:57783"/>
        <dbReference type="ChEBI" id="CHEBI:58349"/>
        <dbReference type="ChEBI" id="CHEBI:78904"/>
        <dbReference type="ChEBI" id="CHEBI:87044"/>
    </reaction>
</comment>
<comment type="pathway">
    <text>Steroid biosynthesis; cholesterol biosynthesis.</text>
</comment>
<comment type="subunit">
    <text evidence="2">Interacts with CBX5. Interacts with DNA. Interaction with DNA is sequence independent with higher affinity for supercoiled and relaxed circular DNA than linear DNA. Interacts with lamin B. Interacts with CLNK. Interacts with TMEM147; promoting LBR localization to the nucleus inner membrane.</text>
</comment>
<comment type="subcellular location">
    <subcellularLocation>
        <location evidence="2">Nucleus inner membrane</location>
        <topology evidence="4">Multi-pass membrane protein</topology>
    </subcellularLocation>
    <subcellularLocation>
        <location evidence="2">Nucleus</location>
    </subcellularLocation>
    <subcellularLocation>
        <location evidence="2">Cytoplasm</location>
    </subcellularLocation>
    <subcellularLocation>
        <location evidence="2">Endoplasmic reticulum membrane</location>
    </subcellularLocation>
    <text evidence="2">Nucleus; nuclear rim.</text>
</comment>
<comment type="domain">
    <text evidence="1">The Tudor domain may not recognize methylation marks, but rather bind unassembled free histone H3.</text>
</comment>
<comment type="PTM">
    <text evidence="2">Phosphorylated by CDK1 in mitosis when the inner nuclear membrane breaks down into vesicles that dissociate from the lamina and the chromatin (By similarity). It is phosphorylated by different protein kinases in interphase when the membrane is associated with these structures (By similarity). Phosphorylation of LBR and HP1 proteins may be responsible for some of the alterations in chromatin organization and nuclear structure which occur at various times during the cell cycle (By similarity). Phosphorylated by SRPK1 (By similarity). In late anaphase LBR is dephosphorylated, probably by PP1 and/or PP2A, allowing reassociation with chromatin (By similarity).</text>
</comment>
<comment type="similarity">
    <text evidence="6">Belongs to the ERG4/ERG24 family.</text>
</comment>
<reference key="1">
    <citation type="submission" date="2004-11" db="EMBL/GenBank/DDBJ databases">
        <authorList>
            <consortium name="The German cDNA consortium"/>
        </authorList>
    </citation>
    <scope>NUCLEOTIDE SEQUENCE [LARGE SCALE MRNA]</scope>
    <source>
        <tissue>Kidney</tissue>
    </source>
</reference>